<accession>P0DPU7</accession>
<comment type="subcellular location">
    <subcellularLocation>
        <location evidence="1">Secreted</location>
    </subcellularLocation>
</comment>
<comment type="tissue specificity">
    <text evidence="4">Expressed by the venom gland.</text>
</comment>
<comment type="PTM">
    <text evidence="3">Contains 2 disulfide bonds.</text>
</comment>
<comment type="mass spectrometry"/>
<comment type="similarity">
    <text evidence="3">Belongs to the scolopendra neurotoxin 3 family.</text>
</comment>
<sequence>MKVFIAVLSIAIVLIIIVSIQETTANTGEAETTFAVPNKKFTREDCKKECARRFTNGVLSKVIIAKLTGTKCYCKYKT</sequence>
<reference key="1">
    <citation type="journal article" date="2012" name="J. Proteome Res.">
        <title>Venomic and transcriptomic analysis of centipede Scolopendra subspinipes dehaani.</title>
        <authorList>
            <person name="Liu Z.C."/>
            <person name="Zhang R."/>
            <person name="Zhao F."/>
            <person name="Chen Z.M."/>
            <person name="Liu H.W."/>
            <person name="Wang Y.J."/>
            <person name="Jiang P."/>
            <person name="Zhang Y."/>
            <person name="Wu Y."/>
            <person name="Ding J.P."/>
            <person name="Lee W.H."/>
            <person name="Zhang Y."/>
        </authorList>
    </citation>
    <scope>NUCLEOTIDE SEQUENCE [MRNA]</scope>
    <scope>PROTEIN SEQUENCE OF 26-45</scope>
    <scope>SUBCELLULAR LOCATION</scope>
    <scope>MASS SPECTROMETRY</scope>
    <source>
        <tissue>Venom</tissue>
        <tissue>Venom gland</tissue>
    </source>
</reference>
<feature type="signal peptide" evidence="1">
    <location>
        <begin position="1"/>
        <end position="25"/>
    </location>
</feature>
<feature type="chain" id="PRO_0000446686" description="Scoloptoxin SSD996" evidence="3">
    <location>
        <begin position="26"/>
        <end position="78"/>
    </location>
</feature>
<evidence type="ECO:0000269" key="1">
    <source>
    </source>
</evidence>
<evidence type="ECO:0000303" key="2">
    <source>
    </source>
</evidence>
<evidence type="ECO:0000305" key="3"/>
<evidence type="ECO:0000305" key="4">
    <source>
    </source>
</evidence>
<organism>
    <name type="scientific">Scolopendra dehaani</name>
    <name type="common">Thai centipede</name>
    <name type="synonym">Scolopendra subspinipes dehaani</name>
    <dbReference type="NCBI Taxonomy" id="2609776"/>
    <lineage>
        <taxon>Eukaryota</taxon>
        <taxon>Metazoa</taxon>
        <taxon>Ecdysozoa</taxon>
        <taxon>Arthropoda</taxon>
        <taxon>Myriapoda</taxon>
        <taxon>Chilopoda</taxon>
        <taxon>Pleurostigmophora</taxon>
        <taxon>Scolopendromorpha</taxon>
        <taxon>Scolopendridae</taxon>
        <taxon>Scolopendra</taxon>
    </lineage>
</organism>
<keyword id="KW-0903">Direct protein sequencing</keyword>
<keyword id="KW-1015">Disulfide bond</keyword>
<keyword id="KW-0528">Neurotoxin</keyword>
<keyword id="KW-0964">Secreted</keyword>
<keyword id="KW-0732">Signal</keyword>
<keyword id="KW-0800">Toxin</keyword>
<proteinExistence type="evidence at protein level"/>
<name>PNX36_SCODE</name>
<dbReference type="EMBL" id="KC144986">
    <property type="status" value="NOT_ANNOTATED_CDS"/>
    <property type="molecule type" value="mRNA"/>
</dbReference>
<dbReference type="SMR" id="P0DPU7"/>
<dbReference type="GO" id="GO:0005576">
    <property type="term" value="C:extracellular region"/>
    <property type="evidence" value="ECO:0007669"/>
    <property type="project" value="UniProtKB-SubCell"/>
</dbReference>
<dbReference type="GO" id="GO:0090729">
    <property type="term" value="F:toxin activity"/>
    <property type="evidence" value="ECO:0007669"/>
    <property type="project" value="UniProtKB-KW"/>
</dbReference>
<protein>
    <recommendedName>
        <fullName evidence="2">Scoloptoxin SSD996</fullName>
    </recommendedName>
</protein>